<evidence type="ECO:0000255" key="1">
    <source>
        <dbReference type="HAMAP-Rule" id="MF_01515"/>
    </source>
</evidence>
<protein>
    <recommendedName>
        <fullName evidence="1">UPF0316 protein Cthe_2213</fullName>
    </recommendedName>
</protein>
<proteinExistence type="inferred from homology"/>
<reference key="1">
    <citation type="submission" date="2007-02" db="EMBL/GenBank/DDBJ databases">
        <title>Complete sequence of Clostridium thermocellum ATCC 27405.</title>
        <authorList>
            <consortium name="US DOE Joint Genome Institute"/>
            <person name="Copeland A."/>
            <person name="Lucas S."/>
            <person name="Lapidus A."/>
            <person name="Barry K."/>
            <person name="Detter J.C."/>
            <person name="Glavina del Rio T."/>
            <person name="Hammon N."/>
            <person name="Israni S."/>
            <person name="Dalin E."/>
            <person name="Tice H."/>
            <person name="Pitluck S."/>
            <person name="Chertkov O."/>
            <person name="Brettin T."/>
            <person name="Bruce D."/>
            <person name="Han C."/>
            <person name="Tapia R."/>
            <person name="Gilna P."/>
            <person name="Schmutz J."/>
            <person name="Larimer F."/>
            <person name="Land M."/>
            <person name="Hauser L."/>
            <person name="Kyrpides N."/>
            <person name="Mikhailova N."/>
            <person name="Wu J.H.D."/>
            <person name="Newcomb M."/>
            <person name="Richardson P."/>
        </authorList>
    </citation>
    <scope>NUCLEOTIDE SEQUENCE [LARGE SCALE GENOMIC DNA]</scope>
    <source>
        <strain>ATCC 27405 / DSM 1237 / JCM 9322 / NBRC 103400 / NCIMB 10682 / NRRL B-4536 / VPI 7372</strain>
    </source>
</reference>
<dbReference type="EMBL" id="CP000568">
    <property type="protein sequence ID" value="ABN53415.1"/>
    <property type="molecule type" value="Genomic_DNA"/>
</dbReference>
<dbReference type="RefSeq" id="WP_003513628.1">
    <property type="nucleotide sequence ID" value="NC_009012.1"/>
</dbReference>
<dbReference type="SMR" id="A3DHI6"/>
<dbReference type="STRING" id="203119.Cthe_2213"/>
<dbReference type="GeneID" id="35804486"/>
<dbReference type="KEGG" id="cth:Cthe_2213"/>
<dbReference type="eggNOG" id="COG4843">
    <property type="taxonomic scope" value="Bacteria"/>
</dbReference>
<dbReference type="HOGENOM" id="CLU_106166_0_0_9"/>
<dbReference type="OrthoDB" id="48231at2"/>
<dbReference type="Proteomes" id="UP000002145">
    <property type="component" value="Chromosome"/>
</dbReference>
<dbReference type="GO" id="GO:0005886">
    <property type="term" value="C:plasma membrane"/>
    <property type="evidence" value="ECO:0007669"/>
    <property type="project" value="UniProtKB-SubCell"/>
</dbReference>
<dbReference type="CDD" id="cd16381">
    <property type="entry name" value="YitT_C_like_1"/>
    <property type="match status" value="1"/>
</dbReference>
<dbReference type="Gene3D" id="3.30.70.120">
    <property type="match status" value="1"/>
</dbReference>
<dbReference type="HAMAP" id="MF_01515">
    <property type="entry name" value="UPF0316"/>
    <property type="match status" value="1"/>
</dbReference>
<dbReference type="InterPro" id="IPR019264">
    <property type="entry name" value="DUF2179"/>
</dbReference>
<dbReference type="InterPro" id="IPR044035">
    <property type="entry name" value="DUF5698"/>
</dbReference>
<dbReference type="InterPro" id="IPR015867">
    <property type="entry name" value="N-reg_PII/ATP_PRibTrfase_C"/>
</dbReference>
<dbReference type="InterPro" id="IPR022930">
    <property type="entry name" value="UPF0316"/>
</dbReference>
<dbReference type="NCBIfam" id="NF003191">
    <property type="entry name" value="PRK04164.1-2"/>
    <property type="match status" value="1"/>
</dbReference>
<dbReference type="PANTHER" id="PTHR40060">
    <property type="entry name" value="UPF0316 PROTEIN YEBE"/>
    <property type="match status" value="1"/>
</dbReference>
<dbReference type="PANTHER" id="PTHR40060:SF1">
    <property type="entry name" value="UPF0316 PROTEIN YEBE"/>
    <property type="match status" value="1"/>
</dbReference>
<dbReference type="Pfam" id="PF10035">
    <property type="entry name" value="DUF2179"/>
    <property type="match status" value="1"/>
</dbReference>
<dbReference type="Pfam" id="PF18955">
    <property type="entry name" value="DUF5698"/>
    <property type="match status" value="1"/>
</dbReference>
<comment type="subcellular location">
    <subcellularLocation>
        <location evidence="1">Cell membrane</location>
        <topology evidence="1">Multi-pass membrane protein</topology>
    </subcellularLocation>
</comment>
<comment type="similarity">
    <text evidence="1">Belongs to the UPF0316 family.</text>
</comment>
<sequence>MEGIVNSGLFNWLILPLLIFFSRIIDVTIGTIRIIFVSRGKKYLAPVLGFFEVLVWIMAISQIMQNLNNFVCYFAYAAGFATGTFVGIIIEEKLAIGTLVIRVIVDKNECELKERLSKSGFGVTVVDAKGKNGDVKIIYTIIKRKELQEVVRIIEECNSKAFYSIEDARKVNQGIFRTGTSNHDGTRFFNLFRIHRMSGLDKKTR</sequence>
<feature type="chain" id="PRO_0000292361" description="UPF0316 protein Cthe_2213">
    <location>
        <begin position="1"/>
        <end position="205"/>
    </location>
</feature>
<feature type="transmembrane region" description="Helical" evidence="1">
    <location>
        <begin position="15"/>
        <end position="37"/>
    </location>
</feature>
<feature type="transmembrane region" description="Helical" evidence="1">
    <location>
        <begin position="44"/>
        <end position="64"/>
    </location>
</feature>
<feature type="transmembrane region" description="Helical" evidence="1">
    <location>
        <begin position="70"/>
        <end position="90"/>
    </location>
</feature>
<name>Y2213_ACET2</name>
<gene>
    <name type="ordered locus">Cthe_2213</name>
</gene>
<organism>
    <name type="scientific">Acetivibrio thermocellus (strain ATCC 27405 / DSM 1237 / JCM 9322 / NBRC 103400 / NCIMB 10682 / NRRL B-4536 / VPI 7372)</name>
    <name type="common">Clostridium thermocellum</name>
    <dbReference type="NCBI Taxonomy" id="203119"/>
    <lineage>
        <taxon>Bacteria</taxon>
        <taxon>Bacillati</taxon>
        <taxon>Bacillota</taxon>
        <taxon>Clostridia</taxon>
        <taxon>Eubacteriales</taxon>
        <taxon>Oscillospiraceae</taxon>
        <taxon>Acetivibrio</taxon>
    </lineage>
</organism>
<keyword id="KW-1003">Cell membrane</keyword>
<keyword id="KW-0472">Membrane</keyword>
<keyword id="KW-1185">Reference proteome</keyword>
<keyword id="KW-0812">Transmembrane</keyword>
<keyword id="KW-1133">Transmembrane helix</keyword>
<accession>A3DHI6</accession>